<protein>
    <recommendedName>
        <fullName>Endo-1,4-beta-xylanase A</fullName>
        <shortName>Xylanase A</shortName>
        <ecNumber>3.2.1.8</ecNumber>
    </recommendedName>
    <alternativeName>
        <fullName>1,4-beta-D-xylan xylanohydrolase A</fullName>
    </alternativeName>
    <alternativeName>
        <fullName>Endo-1,4-beta-xylanase G2</fullName>
        <shortName>Xylanase G2</shortName>
    </alternativeName>
</protein>
<evidence type="ECO:0000255" key="1"/>
<evidence type="ECO:0000255" key="2">
    <source>
        <dbReference type="PROSITE-ProRule" id="PRU01097"/>
    </source>
</evidence>
<evidence type="ECO:0000255" key="3">
    <source>
        <dbReference type="PROSITE-ProRule" id="PRU10062"/>
    </source>
</evidence>
<evidence type="ECO:0000255" key="4">
    <source>
        <dbReference type="PROSITE-ProRule" id="PRU10063"/>
    </source>
</evidence>
<evidence type="ECO:0000269" key="5">
    <source>
    </source>
</evidence>
<evidence type="ECO:0000269" key="6">
    <source>
    </source>
</evidence>
<evidence type="ECO:0000305" key="7"/>
<dbReference type="EC" id="3.2.1.8"/>
<dbReference type="EMBL" id="EU848307">
    <property type="protein sequence ID" value="ACJ26384.1"/>
    <property type="molecule type" value="mRNA"/>
</dbReference>
<dbReference type="EMBL" id="AB044941">
    <property type="protein sequence ID" value="BAB20794.1"/>
    <property type="molecule type" value="Genomic_DNA"/>
</dbReference>
<dbReference type="EMBL" id="BA000053">
    <property type="protein sequence ID" value="BAE62665.1"/>
    <property type="molecule type" value="Genomic_DNA"/>
</dbReference>
<dbReference type="PIR" id="JC7577">
    <property type="entry name" value="JC7577"/>
</dbReference>
<dbReference type="RefSeq" id="XP_001823798.1">
    <property type="nucleotide sequence ID" value="XM_001823746.2"/>
</dbReference>
<dbReference type="SMR" id="Q9HFA4"/>
<dbReference type="STRING" id="510516.Q9HFA4"/>
<dbReference type="CAZy" id="GH11">
    <property type="family name" value="Glycoside Hydrolase Family 11"/>
</dbReference>
<dbReference type="GlyCosmos" id="Q9HFA4">
    <property type="glycosylation" value="1 site, No reported glycans"/>
</dbReference>
<dbReference type="EnsemblFungi" id="BAE62665">
    <property type="protein sequence ID" value="BAE62665"/>
    <property type="gene ID" value="AO090120000026"/>
</dbReference>
<dbReference type="GeneID" id="5996057"/>
<dbReference type="KEGG" id="aor:AO090120000026"/>
<dbReference type="VEuPathDB" id="FungiDB:AO090120000026"/>
<dbReference type="HOGENOM" id="CLU_052631_0_0_1"/>
<dbReference type="OMA" id="DYWQNWT"/>
<dbReference type="OrthoDB" id="58536at5052"/>
<dbReference type="BioCyc" id="MetaCyc:MONOMER-16226"/>
<dbReference type="UniPathway" id="UPA00114"/>
<dbReference type="Proteomes" id="UP000006564">
    <property type="component" value="Chromosome 5"/>
</dbReference>
<dbReference type="GO" id="GO:0005576">
    <property type="term" value="C:extracellular region"/>
    <property type="evidence" value="ECO:0000314"/>
    <property type="project" value="AspGD"/>
</dbReference>
<dbReference type="GO" id="GO:0031176">
    <property type="term" value="F:endo-1,4-beta-xylanase activity"/>
    <property type="evidence" value="ECO:0000314"/>
    <property type="project" value="UniProtKB"/>
</dbReference>
<dbReference type="GO" id="GO:0045493">
    <property type="term" value="P:xylan catabolic process"/>
    <property type="evidence" value="ECO:0000314"/>
    <property type="project" value="UniProtKB"/>
</dbReference>
<dbReference type="FunFam" id="2.60.120.180:FF:000001">
    <property type="entry name" value="Endo-1,4-beta-xylanase"/>
    <property type="match status" value="1"/>
</dbReference>
<dbReference type="Gene3D" id="2.60.120.180">
    <property type="match status" value="1"/>
</dbReference>
<dbReference type="InterPro" id="IPR013320">
    <property type="entry name" value="ConA-like_dom_sf"/>
</dbReference>
<dbReference type="InterPro" id="IPR013319">
    <property type="entry name" value="GH11/12"/>
</dbReference>
<dbReference type="InterPro" id="IPR018208">
    <property type="entry name" value="GH11_AS_1"/>
</dbReference>
<dbReference type="InterPro" id="IPR033119">
    <property type="entry name" value="GH11_AS_2"/>
</dbReference>
<dbReference type="InterPro" id="IPR033123">
    <property type="entry name" value="GH11_dom"/>
</dbReference>
<dbReference type="InterPro" id="IPR001137">
    <property type="entry name" value="Glyco_hydro_11"/>
</dbReference>
<dbReference type="PANTHER" id="PTHR46828">
    <property type="entry name" value="ENDO-1,4-BETA-XYLANASE A-RELATED"/>
    <property type="match status" value="1"/>
</dbReference>
<dbReference type="PANTHER" id="PTHR46828:SF2">
    <property type="entry name" value="ENDO-1,4-BETA-XYLANASE A-RELATED"/>
    <property type="match status" value="1"/>
</dbReference>
<dbReference type="Pfam" id="PF00457">
    <property type="entry name" value="Glyco_hydro_11"/>
    <property type="match status" value="1"/>
</dbReference>
<dbReference type="PRINTS" id="PR00911">
    <property type="entry name" value="GLHYDRLASE11"/>
</dbReference>
<dbReference type="SUPFAM" id="SSF49899">
    <property type="entry name" value="Concanavalin A-like lectins/glucanases"/>
    <property type="match status" value="1"/>
</dbReference>
<dbReference type="PROSITE" id="PS00776">
    <property type="entry name" value="GH11_1"/>
    <property type="match status" value="1"/>
</dbReference>
<dbReference type="PROSITE" id="PS00777">
    <property type="entry name" value="GH11_2"/>
    <property type="match status" value="1"/>
</dbReference>
<dbReference type="PROSITE" id="PS51761">
    <property type="entry name" value="GH11_3"/>
    <property type="match status" value="1"/>
</dbReference>
<proteinExistence type="evidence at protein level"/>
<gene>
    <name type="primary">xlnA</name>
    <name type="synonym">xlnG2</name>
    <name type="synonym">xynG2</name>
    <name type="ORF">AO090120000026</name>
</gene>
<keyword id="KW-0119">Carbohydrate metabolism</keyword>
<keyword id="KW-0903">Direct protein sequencing</keyword>
<keyword id="KW-0325">Glycoprotein</keyword>
<keyword id="KW-0326">Glycosidase</keyword>
<keyword id="KW-0378">Hydrolase</keyword>
<keyword id="KW-0624">Polysaccharide degradation</keyword>
<keyword id="KW-1185">Reference proteome</keyword>
<keyword id="KW-0964">Secreted</keyword>
<keyword id="KW-0732">Signal</keyword>
<keyword id="KW-0858">Xylan degradation</keyword>
<reference key="1">
    <citation type="journal article" date="2000" name="Biosci. Biotechnol. Biochem.">
        <title>Molecular cloning, overexpression, and purification of a major xylanase from Aspergillus oryzae.</title>
        <authorList>
            <person name="Kimura T."/>
            <person name="Suzuki H."/>
            <person name="Furuhashi H."/>
            <person name="Aburatani T."/>
            <person name="Morimoto K."/>
            <person name="Karita S."/>
            <person name="Sakka K."/>
            <person name="Ohmiya K."/>
        </authorList>
    </citation>
    <scope>NUCLEOTIDE SEQUENCE [MRNA]</scope>
    <scope>PROTEIN SEQUENCE OF 45-64</scope>
    <scope>FUNCTION</scope>
    <scope>BIOPHYSICOCHEMICAL PROPERTIES</scope>
</reference>
<reference key="2">
    <citation type="submission" date="2008-06" db="EMBL/GenBank/DDBJ databases">
        <title>Gene cloning, sequencing, expression and characterization of a beta-xylanase gene from Aspergillus oryzae VTCC-F187.</title>
        <authorList>
            <person name="Quyen D.T."/>
            <person name="Nguyen S.L.T."/>
        </authorList>
    </citation>
    <scope>NUCLEOTIDE SEQUENCE [GENOMIC DNA]</scope>
    <source>
        <strain>VTCC-F-187</strain>
    </source>
</reference>
<reference key="3">
    <citation type="journal article" date="2005" name="Nature">
        <title>Genome sequencing and analysis of Aspergillus oryzae.</title>
        <authorList>
            <person name="Machida M."/>
            <person name="Asai K."/>
            <person name="Sano M."/>
            <person name="Tanaka T."/>
            <person name="Kumagai T."/>
            <person name="Terai G."/>
            <person name="Kusumoto K."/>
            <person name="Arima T."/>
            <person name="Akita O."/>
            <person name="Kashiwagi Y."/>
            <person name="Abe K."/>
            <person name="Gomi K."/>
            <person name="Horiuchi H."/>
            <person name="Kitamoto K."/>
            <person name="Kobayashi T."/>
            <person name="Takeuchi M."/>
            <person name="Denning D.W."/>
            <person name="Galagan J.E."/>
            <person name="Nierman W.C."/>
            <person name="Yu J."/>
            <person name="Archer D.B."/>
            <person name="Bennett J.W."/>
            <person name="Bhatnagar D."/>
            <person name="Cleveland T.E."/>
            <person name="Fedorova N.D."/>
            <person name="Gotoh O."/>
            <person name="Horikawa H."/>
            <person name="Hosoyama A."/>
            <person name="Ichinomiya M."/>
            <person name="Igarashi R."/>
            <person name="Iwashita K."/>
            <person name="Juvvadi P.R."/>
            <person name="Kato M."/>
            <person name="Kato Y."/>
            <person name="Kin T."/>
            <person name="Kokubun A."/>
            <person name="Maeda H."/>
            <person name="Maeyama N."/>
            <person name="Maruyama J."/>
            <person name="Nagasaki H."/>
            <person name="Nakajima T."/>
            <person name="Oda K."/>
            <person name="Okada K."/>
            <person name="Paulsen I."/>
            <person name="Sakamoto K."/>
            <person name="Sawano T."/>
            <person name="Takahashi M."/>
            <person name="Takase K."/>
            <person name="Terabayashi Y."/>
            <person name="Wortman J.R."/>
            <person name="Yamada O."/>
            <person name="Yamagata Y."/>
            <person name="Anazawa H."/>
            <person name="Hata Y."/>
            <person name="Koide Y."/>
            <person name="Komori T."/>
            <person name="Koyama Y."/>
            <person name="Minetoki T."/>
            <person name="Suharnan S."/>
            <person name="Tanaka A."/>
            <person name="Isono K."/>
            <person name="Kuhara S."/>
            <person name="Ogasawara N."/>
            <person name="Kikuchi H."/>
        </authorList>
    </citation>
    <scope>NUCLEOTIDE SEQUENCE [LARGE SCALE GENOMIC DNA]</scope>
    <source>
        <strain>ATCC 42149 / RIB 40</strain>
    </source>
</reference>
<reference key="4">
    <citation type="journal article" date="2006" name="Appl. Environ. Microbiol.">
        <title>Proteomic analysis of extracellular proteins from Aspergillus oryzae grown under submerged and solid-state culture conditions.</title>
        <authorList>
            <person name="Oda K."/>
            <person name="Kakizono D."/>
            <person name="Yamada O."/>
            <person name="Iefuji H."/>
            <person name="Akita O."/>
            <person name="Iwashita K."/>
        </authorList>
    </citation>
    <scope>IDENTIFICATION BY MASS SPECTROMETRY</scope>
    <scope>SUBCELLULAR LOCATION</scope>
</reference>
<name>XYNA_ASPOR</name>
<organism>
    <name type="scientific">Aspergillus oryzae (strain ATCC 42149 / RIB 40)</name>
    <name type="common">Yellow koji mold</name>
    <dbReference type="NCBI Taxonomy" id="510516"/>
    <lineage>
        <taxon>Eukaryota</taxon>
        <taxon>Fungi</taxon>
        <taxon>Dikarya</taxon>
        <taxon>Ascomycota</taxon>
        <taxon>Pezizomycotina</taxon>
        <taxon>Eurotiomycetes</taxon>
        <taxon>Eurotiomycetidae</taxon>
        <taxon>Eurotiales</taxon>
        <taxon>Aspergillaceae</taxon>
        <taxon>Aspergillus</taxon>
        <taxon>Aspergillus subgen. Circumdati</taxon>
    </lineage>
</organism>
<accession>Q9HFA4</accession>
<sequence>MVSFSSILLACSAAIGALATPIEPLADHPNEAFNETAFNDLVGRSTPSSTGYNNGYYYSFWTDGGGDVTYTNGNGGSYSVQWSNVGNFVGGKGWNPGSSRAITYSGSFNPSGNGYLAVYGWTTDPLIEYYIVESYGTYNPGSGGTYKGQVTSDGGTYNIYTSVRTNAPSIIGTATFTQFWSVRTSKRVGGTVTTGNHFNAWAKYGLTLGTHNYQIVATEGYQSSGSSAITVY</sequence>
<feature type="signal peptide" evidence="1">
    <location>
        <begin position="1"/>
        <end position="19"/>
    </location>
</feature>
<feature type="chain" id="PRO_0000393162" description="Endo-1,4-beta-xylanase A">
    <location>
        <begin position="20"/>
        <end position="232"/>
    </location>
</feature>
<feature type="domain" description="GH11" evidence="2">
    <location>
        <begin position="44"/>
        <end position="232"/>
    </location>
</feature>
<feature type="active site" description="Nucleophile" evidence="3">
    <location>
        <position position="128"/>
    </location>
</feature>
<feature type="active site" description="Proton donor" evidence="4">
    <location>
        <position position="219"/>
    </location>
</feature>
<feature type="glycosylation site" description="N-linked (GlcNAc...) asparagine" evidence="1">
    <location>
        <position position="34"/>
    </location>
</feature>
<comment type="function">
    <text evidence="5">Endo-1,4-beta-xylanase involved in the hydrolysis of xylan, a major structural heterogeneous polysaccharide found in plant biomass representing the second most abundant polysaccharide in the biosphere, after cellulose.</text>
</comment>
<comment type="catalytic activity">
    <reaction>
        <text>Endohydrolysis of (1-&gt;4)-beta-D-xylosidic linkages in xylans.</text>
        <dbReference type="EC" id="3.2.1.8"/>
    </reaction>
</comment>
<comment type="biophysicochemical properties">
    <kinetics>
        <KM evidence="5">242.8 uM for birch wood xylan</KM>
        <Vmax evidence="5">123.0 umol/min/mg enzyme</Vmax>
    </kinetics>
    <phDependence>
        <text evidence="5">Optimum pH is 6.0. Retains over 95 percent activity in the pH range from 5.0 to 7.0, and 70 percent activity in the pH range from 4.0 to 8.0.</text>
    </phDependence>
    <temperatureDependence>
        <text evidence="5">Optimum temperature is 58 degrees Celsius. Has complete stability at 60 degrees Celsius.</text>
    </temperatureDependence>
</comment>
<comment type="pathway">
    <text>Glycan degradation; xylan degradation.</text>
</comment>
<comment type="subcellular location">
    <subcellularLocation>
        <location evidence="6">Secreted</location>
    </subcellularLocation>
</comment>
<comment type="miscellaneous">
    <text>The promoter contains two 5'-GGCTAAA-3' sequences identified as binding sites for the xylanolytic transcriptional activator xlnR.</text>
</comment>
<comment type="similarity">
    <text evidence="7">Belongs to the glycosyl hydrolase 11 (cellulase G) family.</text>
</comment>